<name>ATPA_CHLPB</name>
<dbReference type="EC" id="7.1.2.2" evidence="1"/>
<dbReference type="EMBL" id="CP001101">
    <property type="protein sequence ID" value="ACE03266.1"/>
    <property type="molecule type" value="Genomic_DNA"/>
</dbReference>
<dbReference type="SMR" id="B3EL39"/>
<dbReference type="STRING" id="331678.Cphamn1_0297"/>
<dbReference type="KEGG" id="cpb:Cphamn1_0297"/>
<dbReference type="eggNOG" id="COG0056">
    <property type="taxonomic scope" value="Bacteria"/>
</dbReference>
<dbReference type="HOGENOM" id="CLU_010091_2_1_10"/>
<dbReference type="OrthoDB" id="9803053at2"/>
<dbReference type="GO" id="GO:0005886">
    <property type="term" value="C:plasma membrane"/>
    <property type="evidence" value="ECO:0007669"/>
    <property type="project" value="UniProtKB-SubCell"/>
</dbReference>
<dbReference type="GO" id="GO:0045259">
    <property type="term" value="C:proton-transporting ATP synthase complex"/>
    <property type="evidence" value="ECO:0007669"/>
    <property type="project" value="UniProtKB-KW"/>
</dbReference>
<dbReference type="GO" id="GO:0043531">
    <property type="term" value="F:ADP binding"/>
    <property type="evidence" value="ECO:0007669"/>
    <property type="project" value="TreeGrafter"/>
</dbReference>
<dbReference type="GO" id="GO:0005524">
    <property type="term" value="F:ATP binding"/>
    <property type="evidence" value="ECO:0007669"/>
    <property type="project" value="UniProtKB-UniRule"/>
</dbReference>
<dbReference type="GO" id="GO:0046933">
    <property type="term" value="F:proton-transporting ATP synthase activity, rotational mechanism"/>
    <property type="evidence" value="ECO:0007669"/>
    <property type="project" value="UniProtKB-UniRule"/>
</dbReference>
<dbReference type="CDD" id="cd18113">
    <property type="entry name" value="ATP-synt_F1_alpha_C"/>
    <property type="match status" value="1"/>
</dbReference>
<dbReference type="CDD" id="cd18116">
    <property type="entry name" value="ATP-synt_F1_alpha_N"/>
    <property type="match status" value="1"/>
</dbReference>
<dbReference type="CDD" id="cd01132">
    <property type="entry name" value="F1-ATPase_alpha_CD"/>
    <property type="match status" value="1"/>
</dbReference>
<dbReference type="FunFam" id="1.20.150.20:FF:000001">
    <property type="entry name" value="ATP synthase subunit alpha"/>
    <property type="match status" value="1"/>
</dbReference>
<dbReference type="FunFam" id="2.40.30.20:FF:000001">
    <property type="entry name" value="ATP synthase subunit alpha"/>
    <property type="match status" value="1"/>
</dbReference>
<dbReference type="FunFam" id="3.40.50.300:FF:000002">
    <property type="entry name" value="ATP synthase subunit alpha"/>
    <property type="match status" value="1"/>
</dbReference>
<dbReference type="Gene3D" id="2.40.30.20">
    <property type="match status" value="1"/>
</dbReference>
<dbReference type="Gene3D" id="1.20.150.20">
    <property type="entry name" value="ATP synthase alpha/beta chain, C-terminal domain"/>
    <property type="match status" value="1"/>
</dbReference>
<dbReference type="Gene3D" id="3.40.50.300">
    <property type="entry name" value="P-loop containing nucleotide triphosphate hydrolases"/>
    <property type="match status" value="1"/>
</dbReference>
<dbReference type="HAMAP" id="MF_01346">
    <property type="entry name" value="ATP_synth_alpha_bact"/>
    <property type="match status" value="1"/>
</dbReference>
<dbReference type="InterPro" id="IPR023366">
    <property type="entry name" value="ATP_synth_asu-like_sf"/>
</dbReference>
<dbReference type="InterPro" id="IPR000793">
    <property type="entry name" value="ATP_synth_asu_C"/>
</dbReference>
<dbReference type="InterPro" id="IPR038376">
    <property type="entry name" value="ATP_synth_asu_C_sf"/>
</dbReference>
<dbReference type="InterPro" id="IPR033732">
    <property type="entry name" value="ATP_synth_F1_a_nt-bd_dom"/>
</dbReference>
<dbReference type="InterPro" id="IPR005294">
    <property type="entry name" value="ATP_synth_F1_asu"/>
</dbReference>
<dbReference type="InterPro" id="IPR020003">
    <property type="entry name" value="ATPase_a/bsu_AS"/>
</dbReference>
<dbReference type="InterPro" id="IPR004100">
    <property type="entry name" value="ATPase_F1/V1/A1_a/bsu_N"/>
</dbReference>
<dbReference type="InterPro" id="IPR036121">
    <property type="entry name" value="ATPase_F1/V1/A1_a/bsu_N_sf"/>
</dbReference>
<dbReference type="InterPro" id="IPR000194">
    <property type="entry name" value="ATPase_F1/V1/A1_a/bsu_nucl-bd"/>
</dbReference>
<dbReference type="InterPro" id="IPR027417">
    <property type="entry name" value="P-loop_NTPase"/>
</dbReference>
<dbReference type="NCBIfam" id="TIGR00962">
    <property type="entry name" value="atpA"/>
    <property type="match status" value="1"/>
</dbReference>
<dbReference type="NCBIfam" id="NF009884">
    <property type="entry name" value="PRK13343.1"/>
    <property type="match status" value="1"/>
</dbReference>
<dbReference type="PANTHER" id="PTHR48082">
    <property type="entry name" value="ATP SYNTHASE SUBUNIT ALPHA, MITOCHONDRIAL"/>
    <property type="match status" value="1"/>
</dbReference>
<dbReference type="PANTHER" id="PTHR48082:SF2">
    <property type="entry name" value="ATP SYNTHASE SUBUNIT ALPHA, MITOCHONDRIAL"/>
    <property type="match status" value="1"/>
</dbReference>
<dbReference type="Pfam" id="PF00006">
    <property type="entry name" value="ATP-synt_ab"/>
    <property type="match status" value="1"/>
</dbReference>
<dbReference type="Pfam" id="PF00306">
    <property type="entry name" value="ATP-synt_ab_C"/>
    <property type="match status" value="1"/>
</dbReference>
<dbReference type="Pfam" id="PF02874">
    <property type="entry name" value="ATP-synt_ab_N"/>
    <property type="match status" value="1"/>
</dbReference>
<dbReference type="PIRSF" id="PIRSF039088">
    <property type="entry name" value="F_ATPase_subunit_alpha"/>
    <property type="match status" value="1"/>
</dbReference>
<dbReference type="SUPFAM" id="SSF47917">
    <property type="entry name" value="C-terminal domain of alpha and beta subunits of F1 ATP synthase"/>
    <property type="match status" value="1"/>
</dbReference>
<dbReference type="SUPFAM" id="SSF50615">
    <property type="entry name" value="N-terminal domain of alpha and beta subunits of F1 ATP synthase"/>
    <property type="match status" value="1"/>
</dbReference>
<dbReference type="SUPFAM" id="SSF52540">
    <property type="entry name" value="P-loop containing nucleoside triphosphate hydrolases"/>
    <property type="match status" value="1"/>
</dbReference>
<dbReference type="PROSITE" id="PS00152">
    <property type="entry name" value="ATPASE_ALPHA_BETA"/>
    <property type="match status" value="1"/>
</dbReference>
<sequence>MSTTVRPDEVSAILRKHLAGFESEADVYDVGTVLQVGDGIARIYGLSKVAAGELLEFPDNVMGMALNLEEDNVGAVMFGKSTAVKEGDTVKRTGILASIPVGEAMLGRVINPLGEPIDGKGPIETSIRLPLERKAPGVIFRKSVNQPLQTGLKAIDAMIPIGRGQRELIIGDRQTGKTAVAIDTIINQKGKDVFCIYVAIGQKGSTIAQVVSTLEKYGAMEYTTVIASSASDPAPMQFIAPYAGAAIGEFFRDTGRHALVIYDDLSKQAVAYRQLSLLLRRPPGREAYPGDVFYLHSRLLERAAKITDDLETAKKMNDLPEPLKPMVKAGGSLTALPVIETQAGDVSAYIPTNVISITDGQIFLEPNLFNAGQRPAINVGISVSRVGGSAQIKAMKKITGTLRLDLAQFRELEAFSKFGSDLDKATKAQLDRGARLVEILKQDQYVPMAVEKQVAIIFAGTQGVLDQLDLQYIRRFEEEFLSLLEHKHSDILNSIAETGQMDVDVAKRLKEVAEQFMSTFKQKVTA</sequence>
<reference key="1">
    <citation type="submission" date="2008-06" db="EMBL/GenBank/DDBJ databases">
        <title>Complete sequence of Chlorobium phaeobacteroides BS1.</title>
        <authorList>
            <consortium name="US DOE Joint Genome Institute"/>
            <person name="Lucas S."/>
            <person name="Copeland A."/>
            <person name="Lapidus A."/>
            <person name="Glavina del Rio T."/>
            <person name="Dalin E."/>
            <person name="Tice H."/>
            <person name="Bruce D."/>
            <person name="Goodwin L."/>
            <person name="Pitluck S."/>
            <person name="Schmutz J."/>
            <person name="Larimer F."/>
            <person name="Land M."/>
            <person name="Hauser L."/>
            <person name="Kyrpides N."/>
            <person name="Ovchinnikova G."/>
            <person name="Li T."/>
            <person name="Liu Z."/>
            <person name="Zhao F."/>
            <person name="Overmann J."/>
            <person name="Bryant D.A."/>
            <person name="Richardson P."/>
        </authorList>
    </citation>
    <scope>NUCLEOTIDE SEQUENCE [LARGE SCALE GENOMIC DNA]</scope>
    <source>
        <strain>BS1</strain>
    </source>
</reference>
<keyword id="KW-0066">ATP synthesis</keyword>
<keyword id="KW-0067">ATP-binding</keyword>
<keyword id="KW-0997">Cell inner membrane</keyword>
<keyword id="KW-1003">Cell membrane</keyword>
<keyword id="KW-0139">CF(1)</keyword>
<keyword id="KW-0375">Hydrogen ion transport</keyword>
<keyword id="KW-0406">Ion transport</keyword>
<keyword id="KW-0472">Membrane</keyword>
<keyword id="KW-0547">Nucleotide-binding</keyword>
<keyword id="KW-1278">Translocase</keyword>
<keyword id="KW-0813">Transport</keyword>
<comment type="function">
    <text evidence="1">Produces ATP from ADP in the presence of a proton gradient across the membrane. The alpha chain is a regulatory subunit.</text>
</comment>
<comment type="catalytic activity">
    <reaction evidence="1">
        <text>ATP + H2O + 4 H(+)(in) = ADP + phosphate + 5 H(+)(out)</text>
        <dbReference type="Rhea" id="RHEA:57720"/>
        <dbReference type="ChEBI" id="CHEBI:15377"/>
        <dbReference type="ChEBI" id="CHEBI:15378"/>
        <dbReference type="ChEBI" id="CHEBI:30616"/>
        <dbReference type="ChEBI" id="CHEBI:43474"/>
        <dbReference type="ChEBI" id="CHEBI:456216"/>
        <dbReference type="EC" id="7.1.2.2"/>
    </reaction>
</comment>
<comment type="subunit">
    <text evidence="1">F-type ATPases have 2 components, CF(1) - the catalytic core - and CF(0) - the membrane proton channel. CF(1) has five subunits: alpha(3), beta(3), gamma(1), delta(1), epsilon(1). CF(0) has four main subunits: a, b, b' and c.</text>
</comment>
<comment type="subcellular location">
    <subcellularLocation>
        <location evidence="1">Cell inner membrane</location>
        <topology evidence="1">Peripheral membrane protein</topology>
    </subcellularLocation>
</comment>
<comment type="similarity">
    <text evidence="1">Belongs to the ATPase alpha/beta chains family.</text>
</comment>
<proteinExistence type="inferred from homology"/>
<protein>
    <recommendedName>
        <fullName evidence="1">ATP synthase subunit alpha</fullName>
        <ecNumber evidence="1">7.1.2.2</ecNumber>
    </recommendedName>
    <alternativeName>
        <fullName evidence="1">ATP synthase F1 sector subunit alpha</fullName>
    </alternativeName>
    <alternativeName>
        <fullName evidence="1">F-ATPase subunit alpha</fullName>
    </alternativeName>
</protein>
<organism>
    <name type="scientific">Chlorobium phaeobacteroides (strain BS1)</name>
    <dbReference type="NCBI Taxonomy" id="331678"/>
    <lineage>
        <taxon>Bacteria</taxon>
        <taxon>Pseudomonadati</taxon>
        <taxon>Chlorobiota</taxon>
        <taxon>Chlorobiia</taxon>
        <taxon>Chlorobiales</taxon>
        <taxon>Chlorobiaceae</taxon>
        <taxon>Chlorobium/Pelodictyon group</taxon>
        <taxon>Chlorobium</taxon>
    </lineage>
</organism>
<feature type="chain" id="PRO_1000143354" description="ATP synthase subunit alpha">
    <location>
        <begin position="1"/>
        <end position="526"/>
    </location>
</feature>
<feature type="binding site" evidence="1">
    <location>
        <begin position="171"/>
        <end position="178"/>
    </location>
    <ligand>
        <name>ATP</name>
        <dbReference type="ChEBI" id="CHEBI:30616"/>
    </ligand>
</feature>
<feature type="site" description="Required for activity" evidence="1">
    <location>
        <position position="382"/>
    </location>
</feature>
<gene>
    <name evidence="1" type="primary">atpA</name>
    <name type="ordered locus">Cphamn1_0297</name>
</gene>
<evidence type="ECO:0000255" key="1">
    <source>
        <dbReference type="HAMAP-Rule" id="MF_01346"/>
    </source>
</evidence>
<accession>B3EL39</accession>